<reference key="1">
    <citation type="journal article" date="2001" name="Nature">
        <title>Complete genome sequence of Salmonella enterica serovar Typhimurium LT2.</title>
        <authorList>
            <person name="McClelland M."/>
            <person name="Sanderson K.E."/>
            <person name="Spieth J."/>
            <person name="Clifton S.W."/>
            <person name="Latreille P."/>
            <person name="Courtney L."/>
            <person name="Porwollik S."/>
            <person name="Ali J."/>
            <person name="Dante M."/>
            <person name="Du F."/>
            <person name="Hou S."/>
            <person name="Layman D."/>
            <person name="Leonard S."/>
            <person name="Nguyen C."/>
            <person name="Scott K."/>
            <person name="Holmes A."/>
            <person name="Grewal N."/>
            <person name="Mulvaney E."/>
            <person name="Ryan E."/>
            <person name="Sun H."/>
            <person name="Florea L."/>
            <person name="Miller W."/>
            <person name="Stoneking T."/>
            <person name="Nhan M."/>
            <person name="Waterston R."/>
            <person name="Wilson R.K."/>
        </authorList>
    </citation>
    <scope>NUCLEOTIDE SEQUENCE [LARGE SCALE GENOMIC DNA]</scope>
    <source>
        <strain>LT2 / SGSC1412 / ATCC 700720</strain>
    </source>
</reference>
<keyword id="KW-0413">Isomerase</keyword>
<keyword id="KW-1185">Reference proteome</keyword>
<keyword id="KW-0694">RNA-binding</keyword>
<keyword id="KW-0698">rRNA processing</keyword>
<organism>
    <name type="scientific">Salmonella typhimurium (strain LT2 / SGSC1412 / ATCC 700720)</name>
    <dbReference type="NCBI Taxonomy" id="99287"/>
    <lineage>
        <taxon>Bacteria</taxon>
        <taxon>Pseudomonadati</taxon>
        <taxon>Pseudomonadota</taxon>
        <taxon>Gammaproteobacteria</taxon>
        <taxon>Enterobacterales</taxon>
        <taxon>Enterobacteriaceae</taxon>
        <taxon>Salmonella</taxon>
    </lineage>
</organism>
<accession>Q8ZP51</accession>
<comment type="function">
    <text evidence="1">Responsible for synthesis of pseudouridine from uracil-2605 in 23S ribosomal RNA.</text>
</comment>
<comment type="catalytic activity">
    <reaction>
        <text>uridine(2605) in 23S rRNA = pseudouridine(2605) in 23S rRNA</text>
        <dbReference type="Rhea" id="RHEA:42520"/>
        <dbReference type="Rhea" id="RHEA-COMP:10095"/>
        <dbReference type="Rhea" id="RHEA-COMP:10096"/>
        <dbReference type="ChEBI" id="CHEBI:65314"/>
        <dbReference type="ChEBI" id="CHEBI:65315"/>
        <dbReference type="EC" id="5.4.99.22"/>
    </reaction>
</comment>
<comment type="similarity">
    <text evidence="3">Belongs to the pseudouridine synthase RsuA family.</text>
</comment>
<protein>
    <recommendedName>
        <fullName>Ribosomal large subunit pseudouridine synthase B</fullName>
        <ecNumber>5.4.99.22</ecNumber>
    </recommendedName>
    <alternativeName>
        <fullName>23S rRNA pseudouridine(2605) synthase</fullName>
    </alternativeName>
    <alternativeName>
        <fullName>rRNA pseudouridylate synthase B</fullName>
    </alternativeName>
    <alternativeName>
        <fullName>rRNA-uridine isomerase B</fullName>
    </alternativeName>
</protein>
<dbReference type="EC" id="5.4.99.22"/>
<dbReference type="EMBL" id="AE006468">
    <property type="protein sequence ID" value="AAL20637.1"/>
    <property type="molecule type" value="Genomic_DNA"/>
</dbReference>
<dbReference type="RefSeq" id="WP_001291233.1">
    <property type="nucleotide sequence ID" value="NC_003197.2"/>
</dbReference>
<dbReference type="SMR" id="Q8ZP51"/>
<dbReference type="STRING" id="99287.STM1719"/>
<dbReference type="PaxDb" id="99287-STM1719"/>
<dbReference type="KEGG" id="stm:STM1719"/>
<dbReference type="PATRIC" id="fig|99287.12.peg.1816"/>
<dbReference type="HOGENOM" id="CLU_024979_1_1_6"/>
<dbReference type="OMA" id="EWINNGW"/>
<dbReference type="PhylomeDB" id="Q8ZP51"/>
<dbReference type="BioCyc" id="SENT99287:STM1719-MONOMER"/>
<dbReference type="Proteomes" id="UP000001014">
    <property type="component" value="Chromosome"/>
</dbReference>
<dbReference type="GO" id="GO:0160139">
    <property type="term" value="F:23S rRNA pseudouridine(2605) synthase activity"/>
    <property type="evidence" value="ECO:0007669"/>
    <property type="project" value="UniProtKB-EC"/>
</dbReference>
<dbReference type="GO" id="GO:0003723">
    <property type="term" value="F:RNA binding"/>
    <property type="evidence" value="ECO:0007669"/>
    <property type="project" value="UniProtKB-KW"/>
</dbReference>
<dbReference type="GO" id="GO:0000455">
    <property type="term" value="P:enzyme-directed rRNA pseudouridine synthesis"/>
    <property type="evidence" value="ECO:0007669"/>
    <property type="project" value="UniProtKB-ARBA"/>
</dbReference>
<dbReference type="CDD" id="cd02556">
    <property type="entry name" value="PseudoU_synth_RluB"/>
    <property type="match status" value="1"/>
</dbReference>
<dbReference type="CDD" id="cd00165">
    <property type="entry name" value="S4"/>
    <property type="match status" value="1"/>
</dbReference>
<dbReference type="FunFam" id="3.10.290.10:FF:000003">
    <property type="entry name" value="Pseudouridine synthase"/>
    <property type="match status" value="1"/>
</dbReference>
<dbReference type="FunFam" id="3.30.2350.10:FF:000002">
    <property type="entry name" value="Pseudouridine synthase"/>
    <property type="match status" value="1"/>
</dbReference>
<dbReference type="FunFam" id="3.30.70.1560:FF:000001">
    <property type="entry name" value="Pseudouridine synthase"/>
    <property type="match status" value="1"/>
</dbReference>
<dbReference type="FunFam" id="3.30.70.580:FF:000009">
    <property type="entry name" value="Pseudouridine synthase"/>
    <property type="match status" value="1"/>
</dbReference>
<dbReference type="Gene3D" id="3.30.2350.10">
    <property type="entry name" value="Pseudouridine synthase"/>
    <property type="match status" value="1"/>
</dbReference>
<dbReference type="Gene3D" id="3.10.290.10">
    <property type="entry name" value="RNA-binding S4 domain"/>
    <property type="match status" value="1"/>
</dbReference>
<dbReference type="InterPro" id="IPR020103">
    <property type="entry name" value="PsdUridine_synth_cat_dom_sf"/>
</dbReference>
<dbReference type="InterPro" id="IPR006145">
    <property type="entry name" value="PsdUridine_synth_RsuA/RluA"/>
</dbReference>
<dbReference type="InterPro" id="IPR000748">
    <property type="entry name" value="PsdUridine_synth_RsuA/RluB/E/F"/>
</dbReference>
<dbReference type="InterPro" id="IPR018496">
    <property type="entry name" value="PsdUridine_synth_RsuA/RluB_CS"/>
</dbReference>
<dbReference type="InterPro" id="IPR050343">
    <property type="entry name" value="RsuA_PseudoU_synthase"/>
</dbReference>
<dbReference type="InterPro" id="IPR002942">
    <property type="entry name" value="S4_RNA-bd"/>
</dbReference>
<dbReference type="InterPro" id="IPR036986">
    <property type="entry name" value="S4_RNA-bd_sf"/>
</dbReference>
<dbReference type="NCBIfam" id="NF007976">
    <property type="entry name" value="PRK10700.1"/>
    <property type="match status" value="1"/>
</dbReference>
<dbReference type="NCBIfam" id="TIGR00093">
    <property type="entry name" value="pseudouridine synthase"/>
    <property type="match status" value="1"/>
</dbReference>
<dbReference type="PANTHER" id="PTHR47683">
    <property type="entry name" value="PSEUDOURIDINE SYNTHASE FAMILY PROTEIN-RELATED"/>
    <property type="match status" value="1"/>
</dbReference>
<dbReference type="PANTHER" id="PTHR47683:SF3">
    <property type="entry name" value="RIBOSOMAL LARGE SUBUNIT PSEUDOURIDINE SYNTHASE B"/>
    <property type="match status" value="1"/>
</dbReference>
<dbReference type="Pfam" id="PF00849">
    <property type="entry name" value="PseudoU_synth_2"/>
    <property type="match status" value="1"/>
</dbReference>
<dbReference type="Pfam" id="PF01479">
    <property type="entry name" value="S4"/>
    <property type="match status" value="1"/>
</dbReference>
<dbReference type="SMART" id="SM00363">
    <property type="entry name" value="S4"/>
    <property type="match status" value="1"/>
</dbReference>
<dbReference type="SUPFAM" id="SSF55174">
    <property type="entry name" value="Alpha-L RNA-binding motif"/>
    <property type="match status" value="1"/>
</dbReference>
<dbReference type="SUPFAM" id="SSF55120">
    <property type="entry name" value="Pseudouridine synthase"/>
    <property type="match status" value="1"/>
</dbReference>
<dbReference type="PROSITE" id="PS01149">
    <property type="entry name" value="PSI_RSU"/>
    <property type="match status" value="1"/>
</dbReference>
<dbReference type="PROSITE" id="PS50889">
    <property type="entry name" value="S4"/>
    <property type="match status" value="1"/>
</dbReference>
<feature type="chain" id="PRO_0000099990" description="Ribosomal large subunit pseudouridine synthase B">
    <location>
        <begin position="1"/>
        <end position="291"/>
    </location>
</feature>
<feature type="domain" description="S4 RNA-binding" evidence="2">
    <location>
        <begin position="3"/>
        <end position="63"/>
    </location>
</feature>
<feature type="active site" description="Nucleophile" evidence="1">
    <location>
        <position position="110"/>
    </location>
</feature>
<name>RLUB_SALTY</name>
<gene>
    <name type="primary">rluB</name>
    <name type="ordered locus">STM1719</name>
</gene>
<proteinExistence type="inferred from homology"/>
<sequence length="291" mass="32612">MSEKLQKVLARAGHGSRREIESIIEAGRVSVDGKIATLGDRVEVTPGLKIRIDGHLISVKESAEQICRVLAYYKPEGELCTRNDPEGRPTVFDRLPKLRGARWIAVGRLDVNTCGLLLFTTDGELANRLMHPSREVEREYAVRVFGQVDESKLRDLSRGVQLEDGPAAFKTIKFSGGEGINQWYNVTLTEGRNREVRRLWEAVGVQVSRLIRVRYGDIPLPKGLPRGGWTELDLAQTNYLRGLVELPPETSSKVAVEKDRRRMKANQIRRAVKRHSQIAGGRRSGGRNNNG</sequence>
<evidence type="ECO:0000250" key="1"/>
<evidence type="ECO:0000255" key="2">
    <source>
        <dbReference type="PROSITE-ProRule" id="PRU00182"/>
    </source>
</evidence>
<evidence type="ECO:0000305" key="3"/>